<keyword id="KW-0067">ATP-binding</keyword>
<keyword id="KW-0520">NAD</keyword>
<keyword id="KW-0547">Nucleotide-binding</keyword>
<keyword id="KW-0548">Nucleotidyltransferase</keyword>
<keyword id="KW-0662">Pyridine nucleotide biosynthesis</keyword>
<keyword id="KW-0808">Transferase</keyword>
<reference key="1">
    <citation type="journal article" date="2009" name="Science">
        <title>The dynamics and time scale of ongoing genomic erosion in symbiotic bacteria.</title>
        <authorList>
            <person name="Moran N.A."/>
            <person name="McLaughlin H.J."/>
            <person name="Sorek R."/>
        </authorList>
    </citation>
    <scope>NUCLEOTIDE SEQUENCE [LARGE SCALE GENOMIC DNA]</scope>
    <source>
        <strain>5A</strain>
    </source>
</reference>
<proteinExistence type="inferred from homology"/>
<accession>B8D9M4</accession>
<evidence type="ECO:0000255" key="1">
    <source>
        <dbReference type="HAMAP-Rule" id="MF_00244"/>
    </source>
</evidence>
<gene>
    <name evidence="1" type="primary">nadD</name>
    <name type="ordered locus">BUAP5A_439</name>
</gene>
<protein>
    <recommendedName>
        <fullName evidence="1">Probable nicotinate-nucleotide adenylyltransferase</fullName>
        <ecNumber evidence="1">2.7.7.18</ecNumber>
    </recommendedName>
    <alternativeName>
        <fullName evidence="1">Deamido-NAD(+) diphosphorylase</fullName>
    </alternativeName>
    <alternativeName>
        <fullName evidence="1">Deamido-NAD(+) pyrophosphorylase</fullName>
    </alternativeName>
    <alternativeName>
        <fullName evidence="1">Nicotinate mononucleotide adenylyltransferase</fullName>
        <shortName evidence="1">NaMN adenylyltransferase</shortName>
    </alternativeName>
</protein>
<feature type="chain" id="PRO_1000125343" description="Probable nicotinate-nucleotide adenylyltransferase">
    <location>
        <begin position="1"/>
        <end position="214"/>
    </location>
</feature>
<dbReference type="EC" id="2.7.7.18" evidence="1"/>
<dbReference type="EMBL" id="CP001161">
    <property type="protein sequence ID" value="ACL30795.1"/>
    <property type="molecule type" value="Genomic_DNA"/>
</dbReference>
<dbReference type="RefSeq" id="WP_009874400.1">
    <property type="nucleotide sequence ID" value="NC_011833.1"/>
</dbReference>
<dbReference type="SMR" id="B8D9M4"/>
<dbReference type="KEGG" id="bap:BUAP5A_439"/>
<dbReference type="HOGENOM" id="CLU_069765_0_0_6"/>
<dbReference type="OrthoDB" id="5295945at2"/>
<dbReference type="UniPathway" id="UPA00253">
    <property type="reaction ID" value="UER00332"/>
</dbReference>
<dbReference type="Proteomes" id="UP000006904">
    <property type="component" value="Chromosome"/>
</dbReference>
<dbReference type="GO" id="GO:0005524">
    <property type="term" value="F:ATP binding"/>
    <property type="evidence" value="ECO:0007669"/>
    <property type="project" value="UniProtKB-KW"/>
</dbReference>
<dbReference type="GO" id="GO:0004515">
    <property type="term" value="F:nicotinate-nucleotide adenylyltransferase activity"/>
    <property type="evidence" value="ECO:0007669"/>
    <property type="project" value="UniProtKB-UniRule"/>
</dbReference>
<dbReference type="GO" id="GO:0009435">
    <property type="term" value="P:NAD biosynthetic process"/>
    <property type="evidence" value="ECO:0007669"/>
    <property type="project" value="UniProtKB-UniRule"/>
</dbReference>
<dbReference type="CDD" id="cd02165">
    <property type="entry name" value="NMNAT"/>
    <property type="match status" value="1"/>
</dbReference>
<dbReference type="Gene3D" id="3.40.50.620">
    <property type="entry name" value="HUPs"/>
    <property type="match status" value="1"/>
</dbReference>
<dbReference type="HAMAP" id="MF_00244">
    <property type="entry name" value="NaMN_adenylyltr"/>
    <property type="match status" value="1"/>
</dbReference>
<dbReference type="InterPro" id="IPR004821">
    <property type="entry name" value="Cyt_trans-like"/>
</dbReference>
<dbReference type="InterPro" id="IPR005248">
    <property type="entry name" value="NadD/NMNAT"/>
</dbReference>
<dbReference type="InterPro" id="IPR014729">
    <property type="entry name" value="Rossmann-like_a/b/a_fold"/>
</dbReference>
<dbReference type="NCBIfam" id="TIGR00125">
    <property type="entry name" value="cyt_tran_rel"/>
    <property type="match status" value="1"/>
</dbReference>
<dbReference type="NCBIfam" id="TIGR00482">
    <property type="entry name" value="nicotinate (nicotinamide) nucleotide adenylyltransferase"/>
    <property type="match status" value="1"/>
</dbReference>
<dbReference type="NCBIfam" id="NF000839">
    <property type="entry name" value="PRK00071.1-1"/>
    <property type="match status" value="1"/>
</dbReference>
<dbReference type="PANTHER" id="PTHR39321">
    <property type="entry name" value="NICOTINATE-NUCLEOTIDE ADENYLYLTRANSFERASE-RELATED"/>
    <property type="match status" value="1"/>
</dbReference>
<dbReference type="PANTHER" id="PTHR39321:SF3">
    <property type="entry name" value="PHOSPHOPANTETHEINE ADENYLYLTRANSFERASE"/>
    <property type="match status" value="1"/>
</dbReference>
<dbReference type="Pfam" id="PF01467">
    <property type="entry name" value="CTP_transf_like"/>
    <property type="match status" value="1"/>
</dbReference>
<dbReference type="SUPFAM" id="SSF52374">
    <property type="entry name" value="Nucleotidylyl transferase"/>
    <property type="match status" value="1"/>
</dbReference>
<sequence length="214" mass="25361">MKKLCAIFGGNFDPIHYGHINLAEKLAKDISIKKIILLPNNYPPHRNKTQTSISDKIKMIKLAIHNNPLFEISYLETKKNNIFYTIDTLKKIRKKISHLEPLCFIIGEDNLQTFYLWKNWREILLYSHLLIYPRKHKKQKNDELEKWIHSNTVYDCNLLHKQPCGLIFFSHAPCINISSSRIRKNYFYGKNSHSLLPSIVNNYILLKKLYYTNQ</sequence>
<name>NADD_BUCA5</name>
<comment type="function">
    <text evidence="1">Catalyzes the reversible adenylation of nicotinate mononucleotide (NaMN) to nicotinic acid adenine dinucleotide (NaAD).</text>
</comment>
<comment type="catalytic activity">
    <reaction evidence="1">
        <text>nicotinate beta-D-ribonucleotide + ATP + H(+) = deamido-NAD(+) + diphosphate</text>
        <dbReference type="Rhea" id="RHEA:22860"/>
        <dbReference type="ChEBI" id="CHEBI:15378"/>
        <dbReference type="ChEBI" id="CHEBI:30616"/>
        <dbReference type="ChEBI" id="CHEBI:33019"/>
        <dbReference type="ChEBI" id="CHEBI:57502"/>
        <dbReference type="ChEBI" id="CHEBI:58437"/>
        <dbReference type="EC" id="2.7.7.18"/>
    </reaction>
</comment>
<comment type="pathway">
    <text evidence="1">Cofactor biosynthesis; NAD(+) biosynthesis; deamido-NAD(+) from nicotinate D-ribonucleotide: step 1/1.</text>
</comment>
<comment type="similarity">
    <text evidence="1">Belongs to the NadD family.</text>
</comment>
<organism>
    <name type="scientific">Buchnera aphidicola subsp. Acyrthosiphon pisum (strain 5A)</name>
    <dbReference type="NCBI Taxonomy" id="563178"/>
    <lineage>
        <taxon>Bacteria</taxon>
        <taxon>Pseudomonadati</taxon>
        <taxon>Pseudomonadota</taxon>
        <taxon>Gammaproteobacteria</taxon>
        <taxon>Enterobacterales</taxon>
        <taxon>Erwiniaceae</taxon>
        <taxon>Buchnera</taxon>
    </lineage>
</organism>